<reference key="1">
    <citation type="journal article" date="2000" name="Proc. Natl. Acad. Sci. U.S.A.">
        <title>Genome sequence of Halobacterium species NRC-1.</title>
        <authorList>
            <person name="Ng W.V."/>
            <person name="Kennedy S.P."/>
            <person name="Mahairas G.G."/>
            <person name="Berquist B."/>
            <person name="Pan M."/>
            <person name="Shukla H.D."/>
            <person name="Lasky S.R."/>
            <person name="Baliga N.S."/>
            <person name="Thorsson V."/>
            <person name="Sbrogna J."/>
            <person name="Swartzell S."/>
            <person name="Weir D."/>
            <person name="Hall J."/>
            <person name="Dahl T.A."/>
            <person name="Welti R."/>
            <person name="Goo Y.A."/>
            <person name="Leithauser B."/>
            <person name="Keller K."/>
            <person name="Cruz R."/>
            <person name="Danson M.J."/>
            <person name="Hough D.W."/>
            <person name="Maddocks D.G."/>
            <person name="Jablonski P.E."/>
            <person name="Krebs M.P."/>
            <person name="Angevine C.M."/>
            <person name="Dale H."/>
            <person name="Isenbarger T.A."/>
            <person name="Peck R.F."/>
            <person name="Pohlschroder M."/>
            <person name="Spudich J.L."/>
            <person name="Jung K.-H."/>
            <person name="Alam M."/>
            <person name="Freitas T."/>
            <person name="Hou S."/>
            <person name="Daniels C.J."/>
            <person name="Dennis P.P."/>
            <person name="Omer A.D."/>
            <person name="Ebhardt H."/>
            <person name="Lowe T.M."/>
            <person name="Liang P."/>
            <person name="Riley M."/>
            <person name="Hood L."/>
            <person name="DasSarma S."/>
        </authorList>
    </citation>
    <scope>NUCLEOTIDE SEQUENCE [LARGE SCALE GENOMIC DNA]</scope>
    <source>
        <strain>ATCC 700922 / JCM 11081 / NRC-1</strain>
    </source>
</reference>
<proteinExistence type="inferred from homology"/>
<protein>
    <recommendedName>
        <fullName evidence="1">Small ribosomal subunit protein eS27</fullName>
    </recommendedName>
</protein>
<dbReference type="EMBL" id="AE004437">
    <property type="protein sequence ID" value="AAG19071.1"/>
    <property type="molecule type" value="Genomic_DNA"/>
</dbReference>
<dbReference type="PIR" id="C84213">
    <property type="entry name" value="C84213"/>
</dbReference>
<dbReference type="RefSeq" id="WP_010902367.1">
    <property type="nucleotide sequence ID" value="NC_002607.1"/>
</dbReference>
<dbReference type="SMR" id="Q9HRT7"/>
<dbReference type="FunCoup" id="Q9HRT7">
    <property type="interactions" value="110"/>
</dbReference>
<dbReference type="STRING" id="64091.VNG_0550G"/>
<dbReference type="PaxDb" id="64091-VNG_0550G"/>
<dbReference type="KEGG" id="hal:VNG_0550G"/>
<dbReference type="PATRIC" id="fig|64091.14.peg.419"/>
<dbReference type="HOGENOM" id="CLU_199465_0_0_2"/>
<dbReference type="InParanoid" id="Q9HRT7"/>
<dbReference type="OrthoDB" id="5718at2157"/>
<dbReference type="PhylomeDB" id="Q9HRT7"/>
<dbReference type="Proteomes" id="UP000000554">
    <property type="component" value="Chromosome"/>
</dbReference>
<dbReference type="GO" id="GO:1990904">
    <property type="term" value="C:ribonucleoprotein complex"/>
    <property type="evidence" value="ECO:0007669"/>
    <property type="project" value="UniProtKB-KW"/>
</dbReference>
<dbReference type="GO" id="GO:0005840">
    <property type="term" value="C:ribosome"/>
    <property type="evidence" value="ECO:0007669"/>
    <property type="project" value="UniProtKB-KW"/>
</dbReference>
<dbReference type="GO" id="GO:0003735">
    <property type="term" value="F:structural constituent of ribosome"/>
    <property type="evidence" value="ECO:0007669"/>
    <property type="project" value="InterPro"/>
</dbReference>
<dbReference type="GO" id="GO:0008270">
    <property type="term" value="F:zinc ion binding"/>
    <property type="evidence" value="ECO:0007669"/>
    <property type="project" value="UniProtKB-UniRule"/>
</dbReference>
<dbReference type="GO" id="GO:0006412">
    <property type="term" value="P:translation"/>
    <property type="evidence" value="ECO:0007669"/>
    <property type="project" value="UniProtKB-UniRule"/>
</dbReference>
<dbReference type="FunFam" id="2.20.25.100:FF:000006">
    <property type="entry name" value="30S ribosomal protein S27e"/>
    <property type="match status" value="1"/>
</dbReference>
<dbReference type="Gene3D" id="2.20.25.100">
    <property type="entry name" value="Zn-binding ribosomal proteins"/>
    <property type="match status" value="1"/>
</dbReference>
<dbReference type="HAMAP" id="MF_00371">
    <property type="entry name" value="Ribosomal_eS27"/>
    <property type="match status" value="1"/>
</dbReference>
<dbReference type="InterPro" id="IPR000592">
    <property type="entry name" value="Ribosomal_eS27"/>
</dbReference>
<dbReference type="InterPro" id="IPR023407">
    <property type="entry name" value="Ribosomal_eS27_Zn-bd_dom_sf"/>
</dbReference>
<dbReference type="InterPro" id="IPR011332">
    <property type="entry name" value="Ribosomal_zn-bd"/>
</dbReference>
<dbReference type="NCBIfam" id="NF001629">
    <property type="entry name" value="PRK00415.1"/>
    <property type="match status" value="1"/>
</dbReference>
<dbReference type="Pfam" id="PF01667">
    <property type="entry name" value="Ribosomal_S27e"/>
    <property type="match status" value="1"/>
</dbReference>
<dbReference type="SUPFAM" id="SSF57829">
    <property type="entry name" value="Zn-binding ribosomal proteins"/>
    <property type="match status" value="1"/>
</dbReference>
<dbReference type="PROSITE" id="PS01168">
    <property type="entry name" value="RIBOSOMAL_S27E"/>
    <property type="match status" value="1"/>
</dbReference>
<gene>
    <name evidence="1" type="primary">rps27e</name>
    <name type="ordered locus">VNG_0550G</name>
</gene>
<feature type="chain" id="PRO_0000149070" description="Small ribosomal subunit protein eS27">
    <location>
        <begin position="1"/>
        <end position="57"/>
    </location>
</feature>
<feature type="zinc finger region" description="C4-type" evidence="1">
    <location>
        <begin position="10"/>
        <end position="32"/>
    </location>
</feature>
<feature type="binding site" evidence="1">
    <location>
        <position position="10"/>
    </location>
    <ligand>
        <name>Zn(2+)</name>
        <dbReference type="ChEBI" id="CHEBI:29105"/>
    </ligand>
</feature>
<feature type="binding site" evidence="1">
    <location>
        <position position="13"/>
    </location>
    <ligand>
        <name>Zn(2+)</name>
        <dbReference type="ChEBI" id="CHEBI:29105"/>
    </ligand>
</feature>
<feature type="binding site" evidence="1">
    <location>
        <position position="29"/>
    </location>
    <ligand>
        <name>Zn(2+)</name>
        <dbReference type="ChEBI" id="CHEBI:29105"/>
    </ligand>
</feature>
<feature type="binding site" evidence="1">
    <location>
        <position position="32"/>
    </location>
    <ligand>
        <name>Zn(2+)</name>
        <dbReference type="ChEBI" id="CHEBI:29105"/>
    </ligand>
</feature>
<accession>Q9HRT7</accession>
<name>RS27_HALSA</name>
<keyword id="KW-0479">Metal-binding</keyword>
<keyword id="KW-1185">Reference proteome</keyword>
<keyword id="KW-0687">Ribonucleoprotein</keyword>
<keyword id="KW-0689">Ribosomal protein</keyword>
<keyword id="KW-0862">Zinc</keyword>
<keyword id="KW-0863">Zinc-finger</keyword>
<sequence>MSGGFYNVECPDCENEQTVFGKASTEVACAVCGTTLARPTGGEADLLGEVIETVEAR</sequence>
<evidence type="ECO:0000255" key="1">
    <source>
        <dbReference type="HAMAP-Rule" id="MF_00371"/>
    </source>
</evidence>
<organism>
    <name type="scientific">Halobacterium salinarum (strain ATCC 700922 / JCM 11081 / NRC-1)</name>
    <name type="common">Halobacterium halobium</name>
    <dbReference type="NCBI Taxonomy" id="64091"/>
    <lineage>
        <taxon>Archaea</taxon>
        <taxon>Methanobacteriati</taxon>
        <taxon>Methanobacteriota</taxon>
        <taxon>Stenosarchaea group</taxon>
        <taxon>Halobacteria</taxon>
        <taxon>Halobacteriales</taxon>
        <taxon>Halobacteriaceae</taxon>
        <taxon>Halobacterium</taxon>
        <taxon>Halobacterium salinarum NRC-34001</taxon>
    </lineage>
</organism>
<comment type="cofactor">
    <cofactor evidence="1">
        <name>Zn(2+)</name>
        <dbReference type="ChEBI" id="CHEBI:29105"/>
    </cofactor>
    <text evidence="1">Binds 1 zinc ion per subunit.</text>
</comment>
<comment type="subunit">
    <text evidence="1">Part of the 30S ribosomal subunit.</text>
</comment>
<comment type="similarity">
    <text evidence="1">Belongs to the eukaryotic ribosomal protein eS27 family.</text>
</comment>